<feature type="chain" id="PRO_0000113120" description="Aspartate carbamoyltransferase catalytic subunit">
    <location>
        <begin position="1"/>
        <end position="307"/>
    </location>
</feature>
<feature type="binding site" evidence="1">
    <location>
        <position position="54"/>
    </location>
    <ligand>
        <name>carbamoyl phosphate</name>
        <dbReference type="ChEBI" id="CHEBI:58228"/>
    </ligand>
</feature>
<feature type="binding site" evidence="1">
    <location>
        <position position="55"/>
    </location>
    <ligand>
        <name>carbamoyl phosphate</name>
        <dbReference type="ChEBI" id="CHEBI:58228"/>
    </ligand>
</feature>
<feature type="binding site" evidence="1">
    <location>
        <position position="83"/>
    </location>
    <ligand>
        <name>L-aspartate</name>
        <dbReference type="ChEBI" id="CHEBI:29991"/>
    </ligand>
</feature>
<feature type="binding site" evidence="1">
    <location>
        <position position="104"/>
    </location>
    <ligand>
        <name>carbamoyl phosphate</name>
        <dbReference type="ChEBI" id="CHEBI:58228"/>
    </ligand>
</feature>
<feature type="binding site" evidence="1">
    <location>
        <position position="132"/>
    </location>
    <ligand>
        <name>carbamoyl phosphate</name>
        <dbReference type="ChEBI" id="CHEBI:58228"/>
    </ligand>
</feature>
<feature type="binding site" evidence="1">
    <location>
        <position position="135"/>
    </location>
    <ligand>
        <name>carbamoyl phosphate</name>
        <dbReference type="ChEBI" id="CHEBI:58228"/>
    </ligand>
</feature>
<feature type="binding site" evidence="1">
    <location>
        <position position="165"/>
    </location>
    <ligand>
        <name>L-aspartate</name>
        <dbReference type="ChEBI" id="CHEBI:29991"/>
    </ligand>
</feature>
<feature type="binding site" evidence="1">
    <location>
        <position position="228"/>
    </location>
    <ligand>
        <name>L-aspartate</name>
        <dbReference type="ChEBI" id="CHEBI:29991"/>
    </ligand>
</feature>
<feature type="binding site" evidence="1">
    <location>
        <position position="267"/>
    </location>
    <ligand>
        <name>carbamoyl phosphate</name>
        <dbReference type="ChEBI" id="CHEBI:58228"/>
    </ligand>
</feature>
<feature type="binding site" evidence="1">
    <location>
        <position position="268"/>
    </location>
    <ligand>
        <name>carbamoyl phosphate</name>
        <dbReference type="ChEBI" id="CHEBI:58228"/>
    </ligand>
</feature>
<keyword id="KW-0665">Pyrimidine biosynthesis</keyword>
<keyword id="KW-1185">Reference proteome</keyword>
<keyword id="KW-0808">Transferase</keyword>
<sequence length="307" mass="35032">MLKNKHLLDPSDFTIEEFDEIFKLAHQIMANPKEYQNICNGKILATLFYEPSTRTRLSFESAMLRLGGQVIGFSEPNSSSVSKGESLRDTIKTVNCYADLIAMRHPLEGAAKVASMYSDIPVINAGDGGHQHPTQTLTDLLTIKEYKGNLEGNTIALCGDLKFGRTVHSLIKALSRYKNNKFILISPIELRIPNYIREQILEKNNIEYKEITSLEEGIKEANILYMTRIQRERFVDQSEYERLKDVYVLDEAKMKGAKEDMMVLHPLPRVNEISYEVDEDSRAFYFKQAKCGMYVRMALMAKLLGEA</sequence>
<name>PYRB_CLOPE</name>
<reference key="1">
    <citation type="journal article" date="2002" name="Proc. Natl. Acad. Sci. U.S.A.">
        <title>Complete genome sequence of Clostridium perfringens, an anaerobic flesh-eater.</title>
        <authorList>
            <person name="Shimizu T."/>
            <person name="Ohtani K."/>
            <person name="Hirakawa H."/>
            <person name="Ohshima K."/>
            <person name="Yamashita A."/>
            <person name="Shiba T."/>
            <person name="Ogasawara N."/>
            <person name="Hattori M."/>
            <person name="Kuhara S."/>
            <person name="Hayashi H."/>
        </authorList>
    </citation>
    <scope>NUCLEOTIDE SEQUENCE [LARGE SCALE GENOMIC DNA]</scope>
    <source>
        <strain>13 / Type A</strain>
    </source>
</reference>
<organism>
    <name type="scientific">Clostridium perfringens (strain 13 / Type A)</name>
    <dbReference type="NCBI Taxonomy" id="195102"/>
    <lineage>
        <taxon>Bacteria</taxon>
        <taxon>Bacillati</taxon>
        <taxon>Bacillota</taxon>
        <taxon>Clostridia</taxon>
        <taxon>Eubacteriales</taxon>
        <taxon>Clostridiaceae</taxon>
        <taxon>Clostridium</taxon>
    </lineage>
</organism>
<gene>
    <name evidence="1" type="primary">pyrB</name>
    <name type="ordered locus">CPE1183</name>
</gene>
<accession>Q8XL59</accession>
<comment type="function">
    <text evidence="1">Catalyzes the condensation of carbamoyl phosphate and aspartate to form carbamoyl aspartate and inorganic phosphate, the committed step in the de novo pyrimidine nucleotide biosynthesis pathway.</text>
</comment>
<comment type="catalytic activity">
    <reaction evidence="1">
        <text>carbamoyl phosphate + L-aspartate = N-carbamoyl-L-aspartate + phosphate + H(+)</text>
        <dbReference type="Rhea" id="RHEA:20013"/>
        <dbReference type="ChEBI" id="CHEBI:15378"/>
        <dbReference type="ChEBI" id="CHEBI:29991"/>
        <dbReference type="ChEBI" id="CHEBI:32814"/>
        <dbReference type="ChEBI" id="CHEBI:43474"/>
        <dbReference type="ChEBI" id="CHEBI:58228"/>
        <dbReference type="EC" id="2.1.3.2"/>
    </reaction>
</comment>
<comment type="pathway">
    <text evidence="1">Pyrimidine metabolism; UMP biosynthesis via de novo pathway; (S)-dihydroorotate from bicarbonate: step 2/3.</text>
</comment>
<comment type="subunit">
    <text evidence="1">Heterododecamer (2C3:3R2) of six catalytic PyrB chains organized as two trimers (C3), and six regulatory PyrI chains organized as three dimers (R2).</text>
</comment>
<comment type="similarity">
    <text evidence="1">Belongs to the aspartate/ornithine carbamoyltransferase superfamily. ATCase family.</text>
</comment>
<evidence type="ECO:0000255" key="1">
    <source>
        <dbReference type="HAMAP-Rule" id="MF_00001"/>
    </source>
</evidence>
<protein>
    <recommendedName>
        <fullName evidence="1">Aspartate carbamoyltransferase catalytic subunit</fullName>
        <ecNumber evidence="1">2.1.3.2</ecNumber>
    </recommendedName>
    <alternativeName>
        <fullName evidence="1">Aspartate transcarbamylase</fullName>
        <shortName evidence="1">ATCase</shortName>
    </alternativeName>
</protein>
<dbReference type="EC" id="2.1.3.2" evidence="1"/>
<dbReference type="EMBL" id="BA000016">
    <property type="protein sequence ID" value="BAB80889.1"/>
    <property type="molecule type" value="Genomic_DNA"/>
</dbReference>
<dbReference type="RefSeq" id="WP_011010310.1">
    <property type="nucleotide sequence ID" value="NC_003366.1"/>
</dbReference>
<dbReference type="SMR" id="Q8XL59"/>
<dbReference type="STRING" id="195102.gene:10490446"/>
<dbReference type="KEGG" id="cpe:CPE1183"/>
<dbReference type="HOGENOM" id="CLU_043846_1_2_9"/>
<dbReference type="UniPathway" id="UPA00070">
    <property type="reaction ID" value="UER00116"/>
</dbReference>
<dbReference type="Proteomes" id="UP000000818">
    <property type="component" value="Chromosome"/>
</dbReference>
<dbReference type="GO" id="GO:0016597">
    <property type="term" value="F:amino acid binding"/>
    <property type="evidence" value="ECO:0007669"/>
    <property type="project" value="InterPro"/>
</dbReference>
<dbReference type="GO" id="GO:0004070">
    <property type="term" value="F:aspartate carbamoyltransferase activity"/>
    <property type="evidence" value="ECO:0007669"/>
    <property type="project" value="UniProtKB-UniRule"/>
</dbReference>
<dbReference type="GO" id="GO:0006207">
    <property type="term" value="P:'de novo' pyrimidine nucleobase biosynthetic process"/>
    <property type="evidence" value="ECO:0007669"/>
    <property type="project" value="InterPro"/>
</dbReference>
<dbReference type="GO" id="GO:0044205">
    <property type="term" value="P:'de novo' UMP biosynthetic process"/>
    <property type="evidence" value="ECO:0007669"/>
    <property type="project" value="UniProtKB-UniRule"/>
</dbReference>
<dbReference type="GO" id="GO:0006520">
    <property type="term" value="P:amino acid metabolic process"/>
    <property type="evidence" value="ECO:0007669"/>
    <property type="project" value="InterPro"/>
</dbReference>
<dbReference type="FunFam" id="3.40.50.1370:FF:000001">
    <property type="entry name" value="Aspartate carbamoyltransferase"/>
    <property type="match status" value="1"/>
</dbReference>
<dbReference type="FunFam" id="3.40.50.1370:FF:000002">
    <property type="entry name" value="Aspartate carbamoyltransferase 2"/>
    <property type="match status" value="1"/>
</dbReference>
<dbReference type="Gene3D" id="3.40.50.1370">
    <property type="entry name" value="Aspartate/ornithine carbamoyltransferase"/>
    <property type="match status" value="2"/>
</dbReference>
<dbReference type="HAMAP" id="MF_00001">
    <property type="entry name" value="Asp_carb_tr"/>
    <property type="match status" value="1"/>
</dbReference>
<dbReference type="InterPro" id="IPR006132">
    <property type="entry name" value="Asp/Orn_carbamoyltranf_P-bd"/>
</dbReference>
<dbReference type="InterPro" id="IPR006130">
    <property type="entry name" value="Asp/Orn_carbamoylTrfase"/>
</dbReference>
<dbReference type="InterPro" id="IPR036901">
    <property type="entry name" value="Asp/Orn_carbamoylTrfase_sf"/>
</dbReference>
<dbReference type="InterPro" id="IPR002082">
    <property type="entry name" value="Asp_carbamoyltransf"/>
</dbReference>
<dbReference type="InterPro" id="IPR006131">
    <property type="entry name" value="Asp_carbamoyltransf_Asp/Orn-bd"/>
</dbReference>
<dbReference type="NCBIfam" id="TIGR00670">
    <property type="entry name" value="asp_carb_tr"/>
    <property type="match status" value="1"/>
</dbReference>
<dbReference type="NCBIfam" id="NF002032">
    <property type="entry name" value="PRK00856.1"/>
    <property type="match status" value="1"/>
</dbReference>
<dbReference type="PANTHER" id="PTHR45753:SF6">
    <property type="entry name" value="ASPARTATE CARBAMOYLTRANSFERASE"/>
    <property type="match status" value="1"/>
</dbReference>
<dbReference type="PANTHER" id="PTHR45753">
    <property type="entry name" value="ORNITHINE CARBAMOYLTRANSFERASE, MITOCHONDRIAL"/>
    <property type="match status" value="1"/>
</dbReference>
<dbReference type="Pfam" id="PF00185">
    <property type="entry name" value="OTCace"/>
    <property type="match status" value="1"/>
</dbReference>
<dbReference type="Pfam" id="PF02729">
    <property type="entry name" value="OTCace_N"/>
    <property type="match status" value="1"/>
</dbReference>
<dbReference type="PRINTS" id="PR00100">
    <property type="entry name" value="AOTCASE"/>
</dbReference>
<dbReference type="PRINTS" id="PR00101">
    <property type="entry name" value="ATCASE"/>
</dbReference>
<dbReference type="SUPFAM" id="SSF53671">
    <property type="entry name" value="Aspartate/ornithine carbamoyltransferase"/>
    <property type="match status" value="1"/>
</dbReference>
<dbReference type="PROSITE" id="PS00097">
    <property type="entry name" value="CARBAMOYLTRANSFERASE"/>
    <property type="match status" value="1"/>
</dbReference>
<proteinExistence type="inferred from homology"/>